<evidence type="ECO:0000250" key="1">
    <source>
        <dbReference type="UniProtKB" id="D3ZEY0"/>
    </source>
</evidence>
<evidence type="ECO:0000250" key="2">
    <source>
        <dbReference type="UniProtKB" id="E9Q8Q6"/>
    </source>
</evidence>
<evidence type="ECO:0000255" key="3"/>
<evidence type="ECO:0000256" key="4">
    <source>
        <dbReference type="SAM" id="MobiDB-lite"/>
    </source>
</evidence>
<evidence type="ECO:0000269" key="5">
    <source>
    </source>
</evidence>
<evidence type="ECO:0000303" key="6">
    <source>
    </source>
</evidence>
<evidence type="ECO:0000305" key="7"/>
<accession>Q6ZP82</accession>
<accession>H7C0P1</accession>
<accession>J3KNW6</accession>
<accession>Q8N8H3</accession>
<proteinExistence type="evidence at protein level"/>
<reference key="1">
    <citation type="journal article" date="2005" name="Nature">
        <title>Generation and annotation of the DNA sequences of human chromosomes 2 and 4.</title>
        <authorList>
            <person name="Hillier L.W."/>
            <person name="Graves T.A."/>
            <person name="Fulton R.S."/>
            <person name="Fulton L.A."/>
            <person name="Pepin K.H."/>
            <person name="Minx P."/>
            <person name="Wagner-McPherson C."/>
            <person name="Layman D."/>
            <person name="Wylie K."/>
            <person name="Sekhon M."/>
            <person name="Becker M.C."/>
            <person name="Fewell G.A."/>
            <person name="Delehaunty K.D."/>
            <person name="Miner T.L."/>
            <person name="Nash W.E."/>
            <person name="Kremitzki C."/>
            <person name="Oddy L."/>
            <person name="Du H."/>
            <person name="Sun H."/>
            <person name="Bradshaw-Cordum H."/>
            <person name="Ali J."/>
            <person name="Carter J."/>
            <person name="Cordes M."/>
            <person name="Harris A."/>
            <person name="Isak A."/>
            <person name="van Brunt A."/>
            <person name="Nguyen C."/>
            <person name="Du F."/>
            <person name="Courtney L."/>
            <person name="Kalicki J."/>
            <person name="Ozersky P."/>
            <person name="Abbott S."/>
            <person name="Armstrong J."/>
            <person name="Belter E.A."/>
            <person name="Caruso L."/>
            <person name="Cedroni M."/>
            <person name="Cotton M."/>
            <person name="Davidson T."/>
            <person name="Desai A."/>
            <person name="Elliott G."/>
            <person name="Erb T."/>
            <person name="Fronick C."/>
            <person name="Gaige T."/>
            <person name="Haakenson W."/>
            <person name="Haglund K."/>
            <person name="Holmes A."/>
            <person name="Harkins R."/>
            <person name="Kim K."/>
            <person name="Kruchowski S.S."/>
            <person name="Strong C.M."/>
            <person name="Grewal N."/>
            <person name="Goyea E."/>
            <person name="Hou S."/>
            <person name="Levy A."/>
            <person name="Martinka S."/>
            <person name="Mead K."/>
            <person name="McLellan M.D."/>
            <person name="Meyer R."/>
            <person name="Randall-Maher J."/>
            <person name="Tomlinson C."/>
            <person name="Dauphin-Kohlberg S."/>
            <person name="Kozlowicz-Reilly A."/>
            <person name="Shah N."/>
            <person name="Swearengen-Shahid S."/>
            <person name="Snider J."/>
            <person name="Strong J.T."/>
            <person name="Thompson J."/>
            <person name="Yoakum M."/>
            <person name="Leonard S."/>
            <person name="Pearman C."/>
            <person name="Trani L."/>
            <person name="Radionenko M."/>
            <person name="Waligorski J.E."/>
            <person name="Wang C."/>
            <person name="Rock S.M."/>
            <person name="Tin-Wollam A.-M."/>
            <person name="Maupin R."/>
            <person name="Latreille P."/>
            <person name="Wendl M.C."/>
            <person name="Yang S.-P."/>
            <person name="Pohl C."/>
            <person name="Wallis J.W."/>
            <person name="Spieth J."/>
            <person name="Bieri T.A."/>
            <person name="Berkowicz N."/>
            <person name="Nelson J.O."/>
            <person name="Osborne J."/>
            <person name="Ding L."/>
            <person name="Meyer R."/>
            <person name="Sabo A."/>
            <person name="Shotland Y."/>
            <person name="Sinha P."/>
            <person name="Wohldmann P.E."/>
            <person name="Cook L.L."/>
            <person name="Hickenbotham M.T."/>
            <person name="Eldred J."/>
            <person name="Williams D."/>
            <person name="Jones T.A."/>
            <person name="She X."/>
            <person name="Ciccarelli F.D."/>
            <person name="Izaurralde E."/>
            <person name="Taylor J."/>
            <person name="Schmutz J."/>
            <person name="Myers R.M."/>
            <person name="Cox D.R."/>
            <person name="Huang X."/>
            <person name="McPherson J.D."/>
            <person name="Mardis E.R."/>
            <person name="Clifton S.W."/>
            <person name="Warren W.C."/>
            <person name="Chinwalla A.T."/>
            <person name="Eddy S.R."/>
            <person name="Marra M.A."/>
            <person name="Ovcharenko I."/>
            <person name="Furey T.S."/>
            <person name="Miller W."/>
            <person name="Eichler E.E."/>
            <person name="Bork P."/>
            <person name="Suyama M."/>
            <person name="Torrents D."/>
            <person name="Waterston R.H."/>
            <person name="Wilson R.K."/>
        </authorList>
    </citation>
    <scope>NUCLEOTIDE SEQUENCE [LARGE SCALE GENOMIC DNA]</scope>
</reference>
<reference key="2">
    <citation type="submission" date="2005-09" db="EMBL/GenBank/DDBJ databases">
        <authorList>
            <person name="Mural R.J."/>
            <person name="Istrail S."/>
            <person name="Sutton G.G."/>
            <person name="Florea L."/>
            <person name="Halpern A.L."/>
            <person name="Mobarry C.M."/>
            <person name="Lippert R."/>
            <person name="Walenz B."/>
            <person name="Shatkay H."/>
            <person name="Dew I."/>
            <person name="Miller J.R."/>
            <person name="Flanigan M.J."/>
            <person name="Edwards N.J."/>
            <person name="Bolanos R."/>
            <person name="Fasulo D."/>
            <person name="Halldorsson B.V."/>
            <person name="Hannenhalli S."/>
            <person name="Turner R."/>
            <person name="Yooseph S."/>
            <person name="Lu F."/>
            <person name="Nusskern D.R."/>
            <person name="Shue B.C."/>
            <person name="Zheng X.H."/>
            <person name="Zhong F."/>
            <person name="Delcher A.L."/>
            <person name="Huson D.H."/>
            <person name="Kravitz S.A."/>
            <person name="Mouchard L."/>
            <person name="Reinert K."/>
            <person name="Remington K.A."/>
            <person name="Clark A.G."/>
            <person name="Waterman M.S."/>
            <person name="Eichler E.E."/>
            <person name="Adams M.D."/>
            <person name="Hunkapiller M.W."/>
            <person name="Myers E.W."/>
            <person name="Venter J.C."/>
        </authorList>
    </citation>
    <scope>NUCLEOTIDE SEQUENCE [LARGE SCALE GENOMIC DNA]</scope>
</reference>
<reference key="3">
    <citation type="journal article" date="2004" name="Nat. Genet.">
        <title>Complete sequencing and characterization of 21,243 full-length human cDNAs.</title>
        <authorList>
            <person name="Ota T."/>
            <person name="Suzuki Y."/>
            <person name="Nishikawa T."/>
            <person name="Otsuki T."/>
            <person name="Sugiyama T."/>
            <person name="Irie R."/>
            <person name="Wakamatsu A."/>
            <person name="Hayashi K."/>
            <person name="Sato H."/>
            <person name="Nagai K."/>
            <person name="Kimura K."/>
            <person name="Makita H."/>
            <person name="Sekine M."/>
            <person name="Obayashi M."/>
            <person name="Nishi T."/>
            <person name="Shibahara T."/>
            <person name="Tanaka T."/>
            <person name="Ishii S."/>
            <person name="Yamamoto J."/>
            <person name="Saito K."/>
            <person name="Kawai Y."/>
            <person name="Isono Y."/>
            <person name="Nakamura Y."/>
            <person name="Nagahari K."/>
            <person name="Murakami K."/>
            <person name="Yasuda T."/>
            <person name="Iwayanagi T."/>
            <person name="Wagatsuma M."/>
            <person name="Shiratori A."/>
            <person name="Sudo H."/>
            <person name="Hosoiri T."/>
            <person name="Kaku Y."/>
            <person name="Kodaira H."/>
            <person name="Kondo H."/>
            <person name="Sugawara M."/>
            <person name="Takahashi M."/>
            <person name="Kanda K."/>
            <person name="Yokoi T."/>
            <person name="Furuya T."/>
            <person name="Kikkawa E."/>
            <person name="Omura Y."/>
            <person name="Abe K."/>
            <person name="Kamihara K."/>
            <person name="Katsuta N."/>
            <person name="Sato K."/>
            <person name="Tanikawa M."/>
            <person name="Yamazaki M."/>
            <person name="Ninomiya K."/>
            <person name="Ishibashi T."/>
            <person name="Yamashita H."/>
            <person name="Murakawa K."/>
            <person name="Fujimori K."/>
            <person name="Tanai H."/>
            <person name="Kimata M."/>
            <person name="Watanabe M."/>
            <person name="Hiraoka S."/>
            <person name="Chiba Y."/>
            <person name="Ishida S."/>
            <person name="Ono Y."/>
            <person name="Takiguchi S."/>
            <person name="Watanabe S."/>
            <person name="Yosida M."/>
            <person name="Hotuta T."/>
            <person name="Kusano J."/>
            <person name="Kanehori K."/>
            <person name="Takahashi-Fujii A."/>
            <person name="Hara H."/>
            <person name="Tanase T.-O."/>
            <person name="Nomura Y."/>
            <person name="Togiya S."/>
            <person name="Komai F."/>
            <person name="Hara R."/>
            <person name="Takeuchi K."/>
            <person name="Arita M."/>
            <person name="Imose N."/>
            <person name="Musashino K."/>
            <person name="Yuuki H."/>
            <person name="Oshima A."/>
            <person name="Sasaki N."/>
            <person name="Aotsuka S."/>
            <person name="Yoshikawa Y."/>
            <person name="Matsunawa H."/>
            <person name="Ichihara T."/>
            <person name="Shiohata N."/>
            <person name="Sano S."/>
            <person name="Moriya S."/>
            <person name="Momiyama H."/>
            <person name="Satoh N."/>
            <person name="Takami S."/>
            <person name="Terashima Y."/>
            <person name="Suzuki O."/>
            <person name="Nakagawa S."/>
            <person name="Senoh A."/>
            <person name="Mizoguchi H."/>
            <person name="Goto Y."/>
            <person name="Shimizu F."/>
            <person name="Wakebe H."/>
            <person name="Hishigaki H."/>
            <person name="Watanabe T."/>
            <person name="Sugiyama A."/>
            <person name="Takemoto M."/>
            <person name="Kawakami B."/>
            <person name="Yamazaki M."/>
            <person name="Watanabe K."/>
            <person name="Kumagai A."/>
            <person name="Itakura S."/>
            <person name="Fukuzumi Y."/>
            <person name="Fujimori Y."/>
            <person name="Komiyama M."/>
            <person name="Tashiro H."/>
            <person name="Tanigami A."/>
            <person name="Fujiwara T."/>
            <person name="Ono T."/>
            <person name="Yamada K."/>
            <person name="Fujii Y."/>
            <person name="Ozaki K."/>
            <person name="Hirao M."/>
            <person name="Ohmori Y."/>
            <person name="Kawabata A."/>
            <person name="Hikiji T."/>
            <person name="Kobatake N."/>
            <person name="Inagaki H."/>
            <person name="Ikema Y."/>
            <person name="Okamoto S."/>
            <person name="Okitani R."/>
            <person name="Kawakami T."/>
            <person name="Noguchi S."/>
            <person name="Itoh T."/>
            <person name="Shigeta K."/>
            <person name="Senba T."/>
            <person name="Matsumura K."/>
            <person name="Nakajima Y."/>
            <person name="Mizuno T."/>
            <person name="Morinaga M."/>
            <person name="Sasaki M."/>
            <person name="Togashi T."/>
            <person name="Oyama M."/>
            <person name="Hata H."/>
            <person name="Watanabe M."/>
            <person name="Komatsu T."/>
            <person name="Mizushima-Sugano J."/>
            <person name="Satoh T."/>
            <person name="Shirai Y."/>
            <person name="Takahashi Y."/>
            <person name="Nakagawa K."/>
            <person name="Okumura K."/>
            <person name="Nagase T."/>
            <person name="Nomura N."/>
            <person name="Kikuchi H."/>
            <person name="Masuho Y."/>
            <person name="Yamashita R."/>
            <person name="Nakai K."/>
            <person name="Yada T."/>
            <person name="Nakamura Y."/>
            <person name="Ohara O."/>
            <person name="Isogai T."/>
            <person name="Sugano S."/>
        </authorList>
    </citation>
    <scope>NUCLEOTIDE SEQUENCE [LARGE SCALE MRNA] OF 557-1450 (ISOFORM 1)</scope>
    <scope>NUCLEOTIDE SEQUENCE [LARGE SCALE MRNA] OF 1121-1530 (ISOFORM 2)</scope>
    <source>
        <tissue>Heart</tissue>
    </source>
</reference>
<reference key="4">
    <citation type="journal article" date="2004" name="Genome Res.">
        <title>The status, quality, and expansion of the NIH full-length cDNA project: the Mammalian Gene Collection (MGC).</title>
        <authorList>
            <consortium name="The MGC Project Team"/>
        </authorList>
    </citation>
    <scope>NUCLEOTIDE SEQUENCE [LARGE SCALE MRNA] OF 560-1450 (ISOFORM 1)</scope>
</reference>
<reference key="5">
    <citation type="journal article" date="2010" name="J. Biol. Chem.">
        <title>CAMDI, a novel disrupted in schizophrenia 1 (DISC1)-binding protein, is required for radial migration.</title>
        <authorList>
            <person name="Fukuda T."/>
            <person name="Sugita S."/>
            <person name="Inatome R."/>
            <person name="Yanagi S."/>
        </authorList>
    </citation>
    <scope>CHARACTERIZATION OF VARIANT TRP-828</scope>
</reference>
<sequence length="1530" mass="175067">MSSQGSPSVALSTTTVSSVAVQAGDSKIVIAVIKCGKWVQLQLAESQPNLLEIGSSQDETKKLLHDHELLLAKLKALEDRVWELLQEADKTAEENKDQSQVYDAMAETLGEAWAALVSMLERRTELLRLTSEFFENALEFAIKIDQAEDFLQNTHEFESAESLKSLLQLHEHHTKELLERSLALLNKSQQLTDFIEKFKCEGPNVNPELTQGAHSSCLKVDRLLELLQDRRRQLDKYLKQQWQELSQVLQICQWDQQENQVTCWFQKTIRNLQEQSLGSSLSDNEDRIHKQEELIIKAKEWNSAVEKLKSEALRILLSKDYVEKEHLQLSHQKLSQLQEEFGQLMVERNTWLKKANEFFNSANKAFDVLGRVEAYLKLLKSEGLSLAVLAVRHEELHRKIKDCTTDALQKGQTLISQVDSCSSQVSGIHEMMGCIKRRVDHLTEQCSAHKEYALKKQQLTASVEGYLRKVEMSIQKISPVLSNAMDVGSTRSESEKILNKYLELDIQAKETSHELEAAAKTMMEKNEFVSDEMVSLSSKARWLAEELNLFGQSIDYRSQVLQTYVAFLKSSEEVEMQFQSLKEFYETEIPQKEQDDAKAKHCSDSAEKQWQLFLKKSFITQDLGLEFLNLINMAKENEILDVKNEVYLMKNTMENQKAEREELSLLRLAWQLKATESKPGKQQWAAFKEQLKKTSHNLKLLQEALMPVSALDLGGSLQFILDLRQKWNDMKPQFQQLNDEVQYIMKESEELTGRGAPVKEKSQQLKDLIHFHQKQKERIQDYEDILYKVVQFHQVKEELGRLIKSRELEFVEQPKELGDAHDVQIHLRCSQEKQARVDHLHRLALSLGVDIISSVQRPHCSNVSAKNLQQQLELLEEDSMKWRAKAEEYGRTLSRSVEYCAMRDEINELKDSFKDIKKKFNNLKFNYTKKNEKSRNLKALKYQIQQVDMYAEKMQALKRKMEKVSNKTSDSFLNYPSDKVNVLLEVMKDLQKHVDDFDKVVTDYKKNLDLTEHFQEVIEECHFWYEDASATVVRVGKYSTECKTKEAVKILHQQFNKFIAPSVPQQEERIQEATDLAQHLYGLEEGQKYIEKIVTKHKEVLESVTELCESLTELEEKLKQGDVLKMNPNLEDFHYDYIDLLKEPAKNKQTIFNEERNKGQVQVADLLGINGTGEERLPQDLKVSTDKEGGVQDLLLPEDMLSGEEYECVSPDDISLPPLPGSPESPLAPSDMEVEEPVSSSLSLHISSYGVQAGTSSPGDAQESVLPPPVAFADACNDKRETFSSHFERPYLQFKAEPPLTSRGFVEKSTALHRISAEHPESMMSEVHERALQQHPQAQGGLLETREKMHADNNFTKTQDRLHASSDAFSGLRFQSGTSRGYQRQMVPREEIKSTSAKSSVVSLADQAPNFSRLLSNVTVMEGSPVTLEVEVTGFPEPTLTWYKKGQKLSADGHLQVLHKETRHSVFIPKVCKADAGLYVARAQNSSGALSSNVILHVTGNCRLPITRVNWITLCVVYVSVSLMYWLLTQ</sequence>
<organism>
    <name type="scientific">Homo sapiens</name>
    <name type="common">Human</name>
    <dbReference type="NCBI Taxonomy" id="9606"/>
    <lineage>
        <taxon>Eukaryota</taxon>
        <taxon>Metazoa</taxon>
        <taxon>Chordata</taxon>
        <taxon>Craniata</taxon>
        <taxon>Vertebrata</taxon>
        <taxon>Euteleostomi</taxon>
        <taxon>Mammalia</taxon>
        <taxon>Eutheria</taxon>
        <taxon>Euarchontoglires</taxon>
        <taxon>Primates</taxon>
        <taxon>Haplorrhini</taxon>
        <taxon>Catarrhini</taxon>
        <taxon>Hominidae</taxon>
        <taxon>Homo</taxon>
    </lineage>
</organism>
<dbReference type="EMBL" id="AC023270">
    <property type="protein sequence ID" value="AAX88845.1"/>
    <property type="status" value="ALT_SEQ"/>
    <property type="molecule type" value="Genomic_DNA"/>
</dbReference>
<dbReference type="EMBL" id="AC093792">
    <property type="status" value="NOT_ANNOTATED_CDS"/>
    <property type="molecule type" value="Genomic_DNA"/>
</dbReference>
<dbReference type="EMBL" id="AC092640">
    <property type="status" value="NOT_ANNOTATED_CDS"/>
    <property type="molecule type" value="Genomic_DNA"/>
</dbReference>
<dbReference type="EMBL" id="CH471058">
    <property type="protein sequence ID" value="EAX11011.1"/>
    <property type="molecule type" value="Genomic_DNA"/>
</dbReference>
<dbReference type="EMBL" id="AK096821">
    <property type="protein sequence ID" value="BAC04869.1"/>
    <property type="status" value="ALT_SEQ"/>
    <property type="molecule type" value="mRNA"/>
</dbReference>
<dbReference type="EMBL" id="AK129847">
    <property type="protein sequence ID" value="BAC85242.1"/>
    <property type="status" value="ALT_INIT"/>
    <property type="molecule type" value="mRNA"/>
</dbReference>
<dbReference type="EMBL" id="BC115378">
    <property type="protein sequence ID" value="AAI15379.1"/>
    <property type="status" value="ALT_INIT"/>
    <property type="molecule type" value="mRNA"/>
</dbReference>
<dbReference type="RefSeq" id="NP_775919.3">
    <molecule id="Q6ZP82-2"/>
    <property type="nucleotide sequence ID" value="NM_173648.3"/>
</dbReference>
<dbReference type="SMR" id="Q6ZP82"/>
<dbReference type="BioGRID" id="130000">
    <property type="interactions" value="12"/>
</dbReference>
<dbReference type="FunCoup" id="Q6ZP82">
    <property type="interactions" value="26"/>
</dbReference>
<dbReference type="IntAct" id="Q6ZP82">
    <property type="interactions" value="17"/>
</dbReference>
<dbReference type="STRING" id="9606.ENSP00000386503"/>
<dbReference type="GlyGen" id="Q6ZP82">
    <property type="glycosylation" value="1 site, 1 O-linked glycan (1 site)"/>
</dbReference>
<dbReference type="iPTMnet" id="Q6ZP82"/>
<dbReference type="PhosphoSitePlus" id="Q6ZP82"/>
<dbReference type="BioMuta" id="CCDC141"/>
<dbReference type="DMDM" id="74758754"/>
<dbReference type="jPOST" id="Q6ZP82"/>
<dbReference type="MassIVE" id="Q6ZP82"/>
<dbReference type="PaxDb" id="9606-ENSP00000395995"/>
<dbReference type="PeptideAtlas" id="Q6ZP82"/>
<dbReference type="ProteomicsDB" id="44366"/>
<dbReference type="ProteomicsDB" id="68066">
    <molecule id="Q6ZP82-1"/>
</dbReference>
<dbReference type="ProteomicsDB" id="68067">
    <molecule id="Q6ZP82-2"/>
</dbReference>
<dbReference type="Antibodypedia" id="2560">
    <property type="antibodies" value="97 antibodies from 19 providers"/>
</dbReference>
<dbReference type="DNASU" id="285025"/>
<dbReference type="Ensembl" id="ENST00000443758.7">
    <molecule id="Q6ZP82-2"/>
    <property type="protein sequence ID" value="ENSP00000390190.2"/>
    <property type="gene ID" value="ENSG00000163492.16"/>
</dbReference>
<dbReference type="GeneID" id="285025"/>
<dbReference type="KEGG" id="hsa:285025"/>
<dbReference type="MANE-Select" id="ENST00000443758.7">
    <property type="protein sequence ID" value="ENSP00000390190.2"/>
    <property type="RefSeq nucleotide sequence ID" value="NM_173648.4"/>
    <property type="RefSeq protein sequence ID" value="NP_775919.3"/>
</dbReference>
<dbReference type="UCSC" id="uc002une.2">
    <molecule id="Q6ZP82-2"/>
    <property type="organism name" value="human"/>
</dbReference>
<dbReference type="AGR" id="HGNC:26821"/>
<dbReference type="CTD" id="285025"/>
<dbReference type="DisGeNET" id="285025"/>
<dbReference type="GeneCards" id="CCDC141"/>
<dbReference type="GeneReviews" id="CCDC141"/>
<dbReference type="HGNC" id="HGNC:26821">
    <property type="gene designation" value="CCDC141"/>
</dbReference>
<dbReference type="HPA" id="ENSG00000163492">
    <property type="expression patterns" value="Tissue enriched (heart)"/>
</dbReference>
<dbReference type="MalaCards" id="CCDC141"/>
<dbReference type="MIM" id="616031">
    <property type="type" value="gene"/>
</dbReference>
<dbReference type="neXtProt" id="NX_Q6ZP82"/>
<dbReference type="OpenTargets" id="ENSG00000163492"/>
<dbReference type="Orphanet" id="478">
    <property type="disease" value="Kallmann syndrome"/>
</dbReference>
<dbReference type="PharmGKB" id="PA162381449"/>
<dbReference type="VEuPathDB" id="HostDB:ENSG00000163492"/>
<dbReference type="eggNOG" id="KOG4240">
    <property type="taxonomic scope" value="Eukaryota"/>
</dbReference>
<dbReference type="GeneTree" id="ENSGT00440000038972"/>
<dbReference type="HOGENOM" id="CLU_251402_0_0_1"/>
<dbReference type="InParanoid" id="Q6ZP82"/>
<dbReference type="OMA" id="DAKAKPC"/>
<dbReference type="OrthoDB" id="9333799at2759"/>
<dbReference type="PAN-GO" id="Q6ZP82">
    <property type="GO annotations" value="1 GO annotation based on evolutionary models"/>
</dbReference>
<dbReference type="TreeFam" id="TF331580"/>
<dbReference type="PathwayCommons" id="Q6ZP82"/>
<dbReference type="SignaLink" id="Q6ZP82"/>
<dbReference type="BioGRID-ORCS" id="285025">
    <property type="hits" value="6 hits in 274 CRISPR screens"/>
</dbReference>
<dbReference type="ChiTaRS" id="CCDC141">
    <property type="organism name" value="human"/>
</dbReference>
<dbReference type="GenomeRNAi" id="285025"/>
<dbReference type="Pharos" id="Q6ZP82">
    <property type="development level" value="Tbio"/>
</dbReference>
<dbReference type="PRO" id="PR:Q6ZP82"/>
<dbReference type="Proteomes" id="UP000005640">
    <property type="component" value="Chromosome 2"/>
</dbReference>
<dbReference type="RNAct" id="Q6ZP82">
    <property type="molecule type" value="protein"/>
</dbReference>
<dbReference type="Bgee" id="ENSG00000163492">
    <property type="expression patterns" value="Expressed in heart left ventricle and 102 other cell types or tissues"/>
</dbReference>
<dbReference type="ExpressionAtlas" id="Q6ZP82">
    <property type="expression patterns" value="baseline and differential"/>
</dbReference>
<dbReference type="GO" id="GO:0005813">
    <property type="term" value="C:centrosome"/>
    <property type="evidence" value="ECO:0007669"/>
    <property type="project" value="UniProtKB-SubCell"/>
</dbReference>
<dbReference type="GO" id="GO:0005737">
    <property type="term" value="C:cytoplasm"/>
    <property type="evidence" value="ECO:0007669"/>
    <property type="project" value="UniProtKB-SubCell"/>
</dbReference>
<dbReference type="GO" id="GO:0051642">
    <property type="term" value="P:centrosome localization"/>
    <property type="evidence" value="ECO:0007669"/>
    <property type="project" value="Ensembl"/>
</dbReference>
<dbReference type="GO" id="GO:0021799">
    <property type="term" value="P:cerebral cortex radially oriented cell migration"/>
    <property type="evidence" value="ECO:0007669"/>
    <property type="project" value="Ensembl"/>
</dbReference>
<dbReference type="FunFam" id="1.20.58.60:FF:000184">
    <property type="entry name" value="Coiled-coil domain containing 141"/>
    <property type="match status" value="1"/>
</dbReference>
<dbReference type="FunFam" id="2.60.40.10:FF:002369">
    <property type="entry name" value="Coiled-coil domain-containing 141"/>
    <property type="match status" value="1"/>
</dbReference>
<dbReference type="FunFam" id="1.20.58.60:FF:000192">
    <property type="entry name" value="coiled-coil domain-containing protein 141 isoform X2"/>
    <property type="match status" value="1"/>
</dbReference>
<dbReference type="Gene3D" id="1.20.58.60">
    <property type="match status" value="3"/>
</dbReference>
<dbReference type="Gene3D" id="2.60.40.10">
    <property type="entry name" value="Immunoglobulins"/>
    <property type="match status" value="1"/>
</dbReference>
<dbReference type="InterPro" id="IPR007110">
    <property type="entry name" value="Ig-like_dom"/>
</dbReference>
<dbReference type="InterPro" id="IPR036179">
    <property type="entry name" value="Ig-like_dom_sf"/>
</dbReference>
<dbReference type="InterPro" id="IPR013783">
    <property type="entry name" value="Ig-like_fold"/>
</dbReference>
<dbReference type="InterPro" id="IPR013098">
    <property type="entry name" value="Ig_I-set"/>
</dbReference>
<dbReference type="InterPro" id="IPR003599">
    <property type="entry name" value="Ig_sub"/>
</dbReference>
<dbReference type="InterPro" id="IPR003598">
    <property type="entry name" value="Ig_sub2"/>
</dbReference>
<dbReference type="InterPro" id="IPR050876">
    <property type="entry name" value="IgLON_domain"/>
</dbReference>
<dbReference type="InterPro" id="IPR002017">
    <property type="entry name" value="Spectrin_repeat"/>
</dbReference>
<dbReference type="PANTHER" id="PTHR42757:SF44">
    <property type="entry name" value="COILED-COIL DOMAIN-CONTAINING PROTEIN 141"/>
    <property type="match status" value="1"/>
</dbReference>
<dbReference type="PANTHER" id="PTHR42757">
    <property type="entry name" value="IGLON FAMILY OF IMMUNOGLOBULIN SUPERFAMILY-RELATED"/>
    <property type="match status" value="1"/>
</dbReference>
<dbReference type="Pfam" id="PF07679">
    <property type="entry name" value="I-set"/>
    <property type="match status" value="1"/>
</dbReference>
<dbReference type="Pfam" id="PF00435">
    <property type="entry name" value="Spectrin"/>
    <property type="match status" value="1"/>
</dbReference>
<dbReference type="SMART" id="SM00409">
    <property type="entry name" value="IG"/>
    <property type="match status" value="1"/>
</dbReference>
<dbReference type="SMART" id="SM00408">
    <property type="entry name" value="IGc2"/>
    <property type="match status" value="1"/>
</dbReference>
<dbReference type="SUPFAM" id="SSF48726">
    <property type="entry name" value="Immunoglobulin"/>
    <property type="match status" value="1"/>
</dbReference>
<dbReference type="SUPFAM" id="SSF46966">
    <property type="entry name" value="Spectrin repeat"/>
    <property type="match status" value="2"/>
</dbReference>
<dbReference type="PROSITE" id="PS50835">
    <property type="entry name" value="IG_LIKE"/>
    <property type="match status" value="1"/>
</dbReference>
<keyword id="KW-0025">Alternative splicing</keyword>
<keyword id="KW-0175">Coiled coil</keyword>
<keyword id="KW-0963">Cytoplasm</keyword>
<keyword id="KW-0206">Cytoskeleton</keyword>
<keyword id="KW-0393">Immunoglobulin domain</keyword>
<keyword id="KW-0597">Phosphoprotein</keyword>
<keyword id="KW-1267">Proteomics identification</keyword>
<keyword id="KW-1185">Reference proteome</keyword>
<keyword id="KW-0832">Ubl conjugation</keyword>
<comment type="function">
    <text evidence="2">Plays a critical role in cortical radial and GnRH neurons migration during brain development. Regulates cortical radial migration by negatively controlling the activity of histone deacetylase 6 (HDAC6) and promotes centrosome maturation. CAMDI is required for dilation formation of cortical neurons during radial migration. Plays a critical role in learning and memory performance through regulation of AMPA-selective glutamate receptors (AMPARs) cell surface expression in competition with KIBRA.</text>
</comment>
<comment type="subunit">
    <text evidence="1 2">Interacts with DISC1. Interacts preferentially with phosphorylated forms of myosin regulatory light chain (MRLC) (By similarity). Interacts (via the N-terminal region) with HDAC6; inhibits the deacetylase activity of HDAC6 (By similarity). Interacts with KIBRA (via the C-terminal region); retains AMPAR in the cytosol after internalization (By similarity).</text>
</comment>
<comment type="interaction">
    <interactant intactId="EBI-928795">
        <id>Q6ZP82</id>
    </interactant>
    <interactant intactId="EBI-529989">
        <id>Q9NRI5</id>
        <label>DISC1</label>
    </interactant>
    <organismsDiffer>false</organismsDiffer>
    <experiments>5</experiments>
</comment>
<comment type="interaction">
    <interactant intactId="EBI-49119542">
        <id>Q6ZP82-1</id>
    </interactant>
    <interactant intactId="EBI-25837549">
        <id>P28329-3</id>
        <label>CHAT</label>
    </interactant>
    <organismsDiffer>false</organismsDiffer>
    <experiments>3</experiments>
</comment>
<comment type="interaction">
    <interactant intactId="EBI-49119542">
        <id>Q6ZP82-1</id>
    </interactant>
    <interactant intactId="EBI-348399">
        <id>P22607</id>
        <label>FGFR3</label>
    </interactant>
    <organismsDiffer>false</organismsDiffer>
    <experiments>3</experiments>
</comment>
<comment type="interaction">
    <interactant intactId="EBI-49119542">
        <id>Q6ZP82-1</id>
    </interactant>
    <interactant intactId="EBI-9641086">
        <id>P21333-2</id>
        <label>FLNA</label>
    </interactant>
    <organismsDiffer>false</organismsDiffer>
    <experiments>3</experiments>
</comment>
<comment type="interaction">
    <interactant intactId="EBI-49119542">
        <id>Q6ZP82-1</id>
    </interactant>
    <interactant intactId="EBI-351506">
        <id>P06396</id>
        <label>GSN</label>
    </interactant>
    <organismsDiffer>false</organismsDiffer>
    <experiments>3</experiments>
</comment>
<comment type="interaction">
    <interactant intactId="EBI-49119542">
        <id>Q6ZP82-1</id>
    </interactant>
    <interactant intactId="EBI-748420">
        <id>Q9NSC5</id>
        <label>HOMER3</label>
    </interactant>
    <organismsDiffer>false</organismsDiffer>
    <experiments>3</experiments>
</comment>
<comment type="interaction">
    <interactant intactId="EBI-49119542">
        <id>Q6ZP82-1</id>
    </interactant>
    <interactant intactId="EBI-10975473">
        <id>O60333-2</id>
        <label>KIF1B</label>
    </interactant>
    <organismsDiffer>false</organismsDiffer>
    <experiments>3</experiments>
</comment>
<comment type="interaction">
    <interactant intactId="EBI-49119542">
        <id>Q6ZP82-1</id>
    </interactant>
    <interactant intactId="EBI-1050743">
        <id>P31153</id>
        <label>MAT2A</label>
    </interactant>
    <organismsDiffer>false</organismsDiffer>
    <experiments>3</experiments>
</comment>
<comment type="interaction">
    <interactant intactId="EBI-49119542">
        <id>Q6ZP82-1</id>
    </interactant>
    <interactant intactId="EBI-473160">
        <id>Q8N2W9</id>
        <label>PIAS4</label>
    </interactant>
    <organismsDiffer>false</organismsDiffer>
    <experiments>3</experiments>
</comment>
<comment type="interaction">
    <interactant intactId="EBI-49119542">
        <id>Q6ZP82-1</id>
    </interactant>
    <interactant intactId="EBI-749195">
        <id>P60891</id>
        <label>PRPS1</label>
    </interactant>
    <organismsDiffer>false</organismsDiffer>
    <experiments>3</experiments>
</comment>
<comment type="interaction">
    <interactant intactId="EBI-49119542">
        <id>Q6ZP82-1</id>
    </interactant>
    <interactant intactId="EBI-720609">
        <id>O76024</id>
        <label>WFS1</label>
    </interactant>
    <organismsDiffer>false</organismsDiffer>
    <experiments>3</experiments>
</comment>
<comment type="subcellular location">
    <subcellularLocation>
        <location evidence="2">Cytoplasm</location>
    </subcellularLocation>
    <subcellularLocation>
        <location evidence="2">Cytoplasm</location>
        <location evidence="2">Cytoskeleton</location>
        <location evidence="2">Microtubule organizing center</location>
        <location evidence="2">Centrosome</location>
    </subcellularLocation>
    <text evidence="2">Co-localized with DISC1 at/around the centrosome. Localizes to the centrosome, at least in part, in a DISC1-dependent manner. Accumulates and oscillates at the dilation in cortical neurons during migration. CAMDI protein level is stabilized at the G1 phase and destabilized at the G2 /M phase.</text>
</comment>
<comment type="alternative products">
    <event type="alternative splicing"/>
    <isoform>
        <id>Q6ZP82-2</id>
        <name>2</name>
        <sequence type="displayed"/>
    </isoform>
    <isoform>
        <id>Q6ZP82-1</id>
        <name>1</name>
        <sequence type="described" ref="VSP_062007 VSP_062008"/>
    </isoform>
</comment>
<comment type="PTM">
    <text evidence="2">Ubiquitinated and degradated by the CDC20-APC/C pathway. During brain development, CDC20-APC/C complex degrades CCDC141 after centrosome translocation into the dilated area. CCDC141 is restabilized in the dilation until the centrosome enters the dilation, at which point it is once again immediately destabilized by CDC20-APC/C complex. The oscillatory regulation of CCDC141 protein is needed for proper cortical migration.</text>
</comment>
<comment type="PTM">
    <text evidence="2">Phosphorylation at Thr-91 by PLK1 affects CCDC141 degradation.</text>
</comment>
<comment type="sequence caution" evidence="7">
    <conflict type="erroneous initiation">
        <sequence resource="EMBL-CDS" id="AAI15379"/>
    </conflict>
    <text>Truncated N-terminus.</text>
</comment>
<comment type="sequence caution" evidence="7">
    <conflict type="erroneous gene model prediction">
        <sequence resource="EMBL-CDS" id="AAX88845"/>
    </conflict>
</comment>
<comment type="sequence caution" evidence="7">
    <conflict type="erroneous initiation">
        <sequence resource="EMBL-CDS" id="BAC04869"/>
    </conflict>
    <text>Truncated N-terminus.</text>
</comment>
<comment type="sequence caution" evidence="7">
    <conflict type="miscellaneous discrepancy">
        <sequence resource="EMBL-CDS" id="BAC04869"/>
    </conflict>
    <text>Contaminating sequence.</text>
</comment>
<comment type="sequence caution" evidence="7">
    <conflict type="erroneous initiation">
        <sequence resource="EMBL-CDS" id="BAC85242"/>
    </conflict>
    <text>Truncated N-terminus.</text>
</comment>
<protein>
    <recommendedName>
        <fullName>Coiled-coil domain-containing protein 141</fullName>
    </recommendedName>
    <alternativeName>
        <fullName evidence="6">Coiled-coil protein associated with myosin II and DISC1</fullName>
    </alternativeName>
</protein>
<name>CC141_HUMAN</name>
<feature type="chain" id="PRO_0000317296" description="Coiled-coil domain-containing protein 141">
    <location>
        <begin position="1"/>
        <end position="1530"/>
    </location>
</feature>
<feature type="domain" description="Ig-like">
    <location>
        <begin position="1409"/>
        <end position="1530"/>
    </location>
</feature>
<feature type="region of interest" description="Disordered" evidence="4">
    <location>
        <begin position="1210"/>
        <end position="1241"/>
    </location>
</feature>
<feature type="coiled-coil region" evidence="3">
    <location>
        <begin position="642"/>
        <end position="706"/>
    </location>
</feature>
<feature type="coiled-coil region" evidence="3">
    <location>
        <begin position="758"/>
        <end position="783"/>
    </location>
</feature>
<feature type="coiled-coil region" evidence="3">
    <location>
        <begin position="861"/>
        <end position="970"/>
    </location>
</feature>
<feature type="modified residue" description="Phosphothreonine" evidence="2">
    <location>
        <position position="91"/>
    </location>
</feature>
<feature type="splice variant" id="VSP_062007" description="In isoform 1.">
    <original>YKKGQKLS</original>
    <variation>WVAYNDKP</variation>
    <location>
        <begin position="1443"/>
        <end position="1450"/>
    </location>
</feature>
<feature type="splice variant" id="VSP_062008" description="In isoform 1.">
    <location>
        <begin position="1451"/>
        <end position="1530"/>
    </location>
</feature>
<feature type="sequence variant" id="VAR_047904" description="Reduced affinity for MRLC and impairs cortical migration; dbSNP:rs12988301." evidence="5">
    <original>R</original>
    <variation>W</variation>
    <location>
        <position position="828"/>
    </location>
</feature>
<feature type="sequence variant" id="VAR_047905" description="In dbSNP:rs17362588.">
    <original>R</original>
    <variation>W</variation>
    <location>
        <position position="935"/>
    </location>
</feature>
<feature type="sequence variant" id="VAR_047906" description="In dbSNP:rs13419085.">
    <original>N</original>
    <variation>S</variation>
    <location>
        <position position="1170"/>
    </location>
</feature>
<gene>
    <name type="primary">CCDC141</name>
    <name evidence="6" type="synonym">CAMDI</name>
</gene>